<keyword id="KW-0119">Carbohydrate metabolism</keyword>
<keyword id="KW-0136">Cellulose degradation</keyword>
<keyword id="KW-0325">Glycoprotein</keyword>
<keyword id="KW-0326">Glycosidase</keyword>
<keyword id="KW-0378">Hydrolase</keyword>
<keyword id="KW-0624">Polysaccharide degradation</keyword>
<keyword id="KW-1185">Reference proteome</keyword>
<keyword id="KW-0964">Secreted</keyword>
<keyword id="KW-0732">Signal</keyword>
<proteinExistence type="inferred from homology"/>
<comment type="function">
    <text evidence="1">Beta-glucosidases are one of a number of cellulolytic enzymes involved in the degradation of cellulosic biomass. Catalyzes the last step releasing glucose from the inhibitory cellobiose (By similarity).</text>
</comment>
<comment type="catalytic activity">
    <reaction>
        <text>Hydrolysis of terminal, non-reducing beta-D-glucosyl residues with release of beta-D-glucose.</text>
        <dbReference type="EC" id="3.2.1.21"/>
    </reaction>
</comment>
<comment type="pathway">
    <text>Glycan metabolism; cellulose degradation.</text>
</comment>
<comment type="subcellular location">
    <subcellularLocation>
        <location evidence="1">Secreted</location>
    </subcellularLocation>
</comment>
<comment type="similarity">
    <text evidence="4">Belongs to the glycosyl hydrolase 3 family.</text>
</comment>
<sequence length="861" mass="93356">MKLSILEAAALTAASVVSAQDDLAYSPPYYPSPWADGHGEWSNAYKRAVDIVSQMTLTEKVNLTTGTGWELERCVGQTGSVPRLGIPSLCLQDSPLGIRMSDYNSAFPAGINVAATWDKKLAYQRGKAMGEEFSDKGIDVQLGPAAGPLGRSPDGGRNWEGFSPDPALTGVLFAETIKGIQDAGVIATAKHYILNEQEHFRQVGEAQGYGFNITETVSSNVDDKTMHELYLWPFADAVRAGVGAVMCSYNQINNSYGCQNSLTLNKLLKAELGFQGFVMSDWSAHHSGVGAALAGLDMSMPGDISFDSGTSFYGTNLTVGVLNGTIPQWRVDDMAVRIMAAYYKVGRDRLWTPPNFSSWTRDEYGFAHFFPSEGAYERVNEFVNVQRDHAQVIRRIGADSVVLLKNDGALPLTGQEKTVGILGEDAGSNPKGANGCSDRGCDKGTLAMAWGSGTANFPYLVTPEQAIQNEVLKGRGNVFAVTDNYDTQQIAAVASQSTVSLVFVNADAGEGFLNVDGNMGDRKNLTLWQNGEEVIKTVTEHCNNTVVVIHSVGPVLIDEWYAHPNVTGILWAGLPGQESGNAIADVLYGRVNPGGKTPFTWGKTRASYGDYLLTEPNNGNGAPQDNFNEGVFIDYRRFDKYNETPIYEFGHGLSYTTFELSGLQVQLINGSSYVPTTGQTSAAQAFGKVEDASSYLYPEGLKRISKFIYPWLNSTDLKASTGDPEYGEPNFEYIPEGATDGSPQPRLPASGGPGGNPGLYEDLFQVSVTITNTGKVAGDEVPQLYVSLGGPNEPKRVLRKFERLHIAPGQQKVWTTTLNRRDLANWDVVAQDWKITPYAKTIFVGTSSRKLPLAGRLPRVQ</sequence>
<accession>Q0CTD7</accession>
<reference key="1">
    <citation type="submission" date="2005-09" db="EMBL/GenBank/DDBJ databases">
        <title>Annotation of the Aspergillus terreus NIH2624 genome.</title>
        <authorList>
            <person name="Birren B.W."/>
            <person name="Lander E.S."/>
            <person name="Galagan J.E."/>
            <person name="Nusbaum C."/>
            <person name="Devon K."/>
            <person name="Henn M."/>
            <person name="Ma L.-J."/>
            <person name="Jaffe D.B."/>
            <person name="Butler J."/>
            <person name="Alvarez P."/>
            <person name="Gnerre S."/>
            <person name="Grabherr M."/>
            <person name="Kleber M."/>
            <person name="Mauceli E.W."/>
            <person name="Brockman W."/>
            <person name="Rounsley S."/>
            <person name="Young S.K."/>
            <person name="LaButti K."/>
            <person name="Pushparaj V."/>
            <person name="DeCaprio D."/>
            <person name="Crawford M."/>
            <person name="Koehrsen M."/>
            <person name="Engels R."/>
            <person name="Montgomery P."/>
            <person name="Pearson M."/>
            <person name="Howarth C."/>
            <person name="Larson L."/>
            <person name="Luoma S."/>
            <person name="White J."/>
            <person name="Alvarado L."/>
            <person name="Kodira C.D."/>
            <person name="Zeng Q."/>
            <person name="Oleary S."/>
            <person name="Yandava C."/>
            <person name="Denning D.W."/>
            <person name="Nierman W.C."/>
            <person name="Milne T."/>
            <person name="Madden K."/>
        </authorList>
    </citation>
    <scope>NUCLEOTIDE SEQUENCE [LARGE SCALE GENOMIC DNA]</scope>
    <source>
        <strain>NIH 2624 / FGSC A1156</strain>
    </source>
</reference>
<dbReference type="EC" id="3.2.1.21"/>
<dbReference type="EMBL" id="CH476597">
    <property type="protein sequence ID" value="EAU36321.1"/>
    <property type="molecule type" value="Genomic_DNA"/>
</dbReference>
<dbReference type="RefSeq" id="XP_001212225.1">
    <property type="nucleotide sequence ID" value="XM_001212225.1"/>
</dbReference>
<dbReference type="SMR" id="Q0CTD7"/>
<dbReference type="STRING" id="341663.Q0CTD7"/>
<dbReference type="GlyCosmos" id="Q0CTD7">
    <property type="glycosylation" value="11 sites, No reported glycans"/>
</dbReference>
<dbReference type="EnsemblFungi" id="EAU36321">
    <property type="protein sequence ID" value="EAU36321"/>
    <property type="gene ID" value="ATEG_03047"/>
</dbReference>
<dbReference type="GeneID" id="4318025"/>
<dbReference type="VEuPathDB" id="FungiDB:ATEG_03047"/>
<dbReference type="eggNOG" id="ENOG502QR4D">
    <property type="taxonomic scope" value="Eukaryota"/>
</dbReference>
<dbReference type="HOGENOM" id="CLU_004542_2_0_1"/>
<dbReference type="OMA" id="YYPSPWA"/>
<dbReference type="OrthoDB" id="416222at2759"/>
<dbReference type="UniPathway" id="UPA00696"/>
<dbReference type="Proteomes" id="UP000007963">
    <property type="component" value="Unassembled WGS sequence"/>
</dbReference>
<dbReference type="GO" id="GO:0005576">
    <property type="term" value="C:extracellular region"/>
    <property type="evidence" value="ECO:0007669"/>
    <property type="project" value="UniProtKB-SubCell"/>
</dbReference>
<dbReference type="GO" id="GO:0008422">
    <property type="term" value="F:beta-glucosidase activity"/>
    <property type="evidence" value="ECO:0007669"/>
    <property type="project" value="UniProtKB-EC"/>
</dbReference>
<dbReference type="GO" id="GO:0030245">
    <property type="term" value="P:cellulose catabolic process"/>
    <property type="evidence" value="ECO:0007669"/>
    <property type="project" value="UniProtKB-UniPathway"/>
</dbReference>
<dbReference type="FunFam" id="2.60.40.10:FF:001391">
    <property type="entry name" value="Beta-glucosidase"/>
    <property type="match status" value="1"/>
</dbReference>
<dbReference type="FunFam" id="3.20.20.300:FF:000002">
    <property type="entry name" value="Probable beta-glucosidase"/>
    <property type="match status" value="1"/>
</dbReference>
<dbReference type="FunFam" id="3.40.50.1700:FF:000003">
    <property type="entry name" value="Probable beta-glucosidase"/>
    <property type="match status" value="1"/>
</dbReference>
<dbReference type="Gene3D" id="3.40.50.1700">
    <property type="entry name" value="Glycoside hydrolase family 3 C-terminal domain"/>
    <property type="match status" value="1"/>
</dbReference>
<dbReference type="Gene3D" id="3.20.20.300">
    <property type="entry name" value="Glycoside hydrolase, family 3, N-terminal domain"/>
    <property type="match status" value="1"/>
</dbReference>
<dbReference type="Gene3D" id="2.60.40.10">
    <property type="entry name" value="Immunoglobulins"/>
    <property type="match status" value="1"/>
</dbReference>
<dbReference type="InterPro" id="IPR050288">
    <property type="entry name" value="Cellulose_deg_GH3"/>
</dbReference>
<dbReference type="InterPro" id="IPR026891">
    <property type="entry name" value="Fn3-like"/>
</dbReference>
<dbReference type="InterPro" id="IPR019800">
    <property type="entry name" value="Glyco_hydro_3_AS"/>
</dbReference>
<dbReference type="InterPro" id="IPR002772">
    <property type="entry name" value="Glyco_hydro_3_C"/>
</dbReference>
<dbReference type="InterPro" id="IPR036881">
    <property type="entry name" value="Glyco_hydro_3_C_sf"/>
</dbReference>
<dbReference type="InterPro" id="IPR001764">
    <property type="entry name" value="Glyco_hydro_3_N"/>
</dbReference>
<dbReference type="InterPro" id="IPR036962">
    <property type="entry name" value="Glyco_hydro_3_N_sf"/>
</dbReference>
<dbReference type="InterPro" id="IPR017853">
    <property type="entry name" value="Glycoside_hydrolase_SF"/>
</dbReference>
<dbReference type="InterPro" id="IPR013783">
    <property type="entry name" value="Ig-like_fold"/>
</dbReference>
<dbReference type="PANTHER" id="PTHR42715">
    <property type="entry name" value="BETA-GLUCOSIDASE"/>
    <property type="match status" value="1"/>
</dbReference>
<dbReference type="PANTHER" id="PTHR42715:SF29">
    <property type="entry name" value="BETA-GLUCOSIDASE A-RELATED"/>
    <property type="match status" value="1"/>
</dbReference>
<dbReference type="Pfam" id="PF14310">
    <property type="entry name" value="Fn3-like"/>
    <property type="match status" value="1"/>
</dbReference>
<dbReference type="Pfam" id="PF00933">
    <property type="entry name" value="Glyco_hydro_3"/>
    <property type="match status" value="1"/>
</dbReference>
<dbReference type="Pfam" id="PF01915">
    <property type="entry name" value="Glyco_hydro_3_C"/>
    <property type="match status" value="1"/>
</dbReference>
<dbReference type="PRINTS" id="PR00133">
    <property type="entry name" value="GLHYDRLASE3"/>
</dbReference>
<dbReference type="SMART" id="SM01217">
    <property type="entry name" value="Fn3_like"/>
    <property type="match status" value="1"/>
</dbReference>
<dbReference type="SUPFAM" id="SSF51445">
    <property type="entry name" value="(Trans)glycosidases"/>
    <property type="match status" value="1"/>
</dbReference>
<dbReference type="SUPFAM" id="SSF52279">
    <property type="entry name" value="Beta-D-glucan exohydrolase, C-terminal domain"/>
    <property type="match status" value="1"/>
</dbReference>
<dbReference type="PROSITE" id="PS00775">
    <property type="entry name" value="GLYCOSYL_HYDROL_F3"/>
    <property type="match status" value="1"/>
</dbReference>
<protein>
    <recommendedName>
        <fullName>Probable beta-glucosidase A</fullName>
        <ecNumber>3.2.1.21</ecNumber>
    </recommendedName>
    <alternativeName>
        <fullName>Beta-D-glucoside glucohydrolase A</fullName>
    </alternativeName>
    <alternativeName>
        <fullName>Cellobiase A</fullName>
    </alternativeName>
    <alternativeName>
        <fullName>Gentiobiase A</fullName>
    </alternativeName>
</protein>
<name>BGLA_ASPTN</name>
<feature type="signal peptide" evidence="2">
    <location>
        <begin position="1"/>
        <end position="19"/>
    </location>
</feature>
<feature type="chain" id="PRO_0000394099" description="Probable beta-glucosidase A">
    <location>
        <begin position="20"/>
        <end position="861"/>
    </location>
</feature>
<feature type="region of interest" description="Disordered" evidence="3">
    <location>
        <begin position="735"/>
        <end position="754"/>
    </location>
</feature>
<feature type="active site" evidence="1">
    <location>
        <position position="281"/>
    </location>
</feature>
<feature type="glycosylation site" description="N-linked (GlcNAc...) asparagine" evidence="2">
    <location>
        <position position="62"/>
    </location>
</feature>
<feature type="glycosylation site" description="N-linked (GlcNAc...) asparagine" evidence="2">
    <location>
        <position position="212"/>
    </location>
</feature>
<feature type="glycosylation site" description="N-linked (GlcNAc...) asparagine" evidence="2">
    <location>
        <position position="253"/>
    </location>
</feature>
<feature type="glycosylation site" description="N-linked (GlcNAc...) asparagine" evidence="2">
    <location>
        <position position="316"/>
    </location>
</feature>
<feature type="glycosylation site" description="N-linked (GlcNAc...) asparagine" evidence="2">
    <location>
        <position position="323"/>
    </location>
</feature>
<feature type="glycosylation site" description="N-linked (GlcNAc...) asparagine" evidence="2">
    <location>
        <position position="355"/>
    </location>
</feature>
<feature type="glycosylation site" description="N-linked (GlcNAc...) asparagine" evidence="2">
    <location>
        <position position="524"/>
    </location>
</feature>
<feature type="glycosylation site" description="N-linked (GlcNAc...) asparagine" evidence="2">
    <location>
        <position position="543"/>
    </location>
</feature>
<feature type="glycosylation site" description="N-linked (GlcNAc...) asparagine" evidence="2">
    <location>
        <position position="565"/>
    </location>
</feature>
<feature type="glycosylation site" description="N-linked (GlcNAc...) asparagine" evidence="2">
    <location>
        <position position="669"/>
    </location>
</feature>
<feature type="glycosylation site" description="N-linked (GlcNAc...) asparagine" evidence="2">
    <location>
        <position position="713"/>
    </location>
</feature>
<gene>
    <name type="primary">bglA</name>
    <name type="synonym">bgl1</name>
    <name type="ORF">ATEG_03047</name>
</gene>
<evidence type="ECO:0000250" key="1"/>
<evidence type="ECO:0000255" key="2"/>
<evidence type="ECO:0000256" key="3">
    <source>
        <dbReference type="SAM" id="MobiDB-lite"/>
    </source>
</evidence>
<evidence type="ECO:0000305" key="4"/>
<organism>
    <name type="scientific">Aspergillus terreus (strain NIH 2624 / FGSC A1156)</name>
    <dbReference type="NCBI Taxonomy" id="341663"/>
    <lineage>
        <taxon>Eukaryota</taxon>
        <taxon>Fungi</taxon>
        <taxon>Dikarya</taxon>
        <taxon>Ascomycota</taxon>
        <taxon>Pezizomycotina</taxon>
        <taxon>Eurotiomycetes</taxon>
        <taxon>Eurotiomycetidae</taxon>
        <taxon>Eurotiales</taxon>
        <taxon>Aspergillaceae</taxon>
        <taxon>Aspergillus</taxon>
        <taxon>Aspergillus subgen. Circumdati</taxon>
    </lineage>
</organism>